<feature type="chain" id="PRO_0000117811" description="NADH-ubiquinone oxidoreductase chain 3">
    <location>
        <begin position="1"/>
        <end position="115"/>
    </location>
</feature>
<feature type="transmembrane region" description="Helical" evidence="2">
    <location>
        <begin position="3"/>
        <end position="23"/>
    </location>
</feature>
<feature type="transmembrane region" description="Helical" evidence="2">
    <location>
        <begin position="56"/>
        <end position="76"/>
    </location>
</feature>
<feature type="transmembrane region" description="Helical" evidence="2">
    <location>
        <begin position="84"/>
        <end position="104"/>
    </location>
</feature>
<accession>Q95915</accession>
<evidence type="ECO:0000250" key="1"/>
<evidence type="ECO:0000255" key="2"/>
<evidence type="ECO:0000305" key="3"/>
<keyword id="KW-0249">Electron transport</keyword>
<keyword id="KW-0472">Membrane</keyword>
<keyword id="KW-0496">Mitochondrion</keyword>
<keyword id="KW-0520">NAD</keyword>
<keyword id="KW-0679">Respiratory chain</keyword>
<keyword id="KW-1278">Translocase</keyword>
<keyword id="KW-0812">Transmembrane</keyword>
<keyword id="KW-1133">Transmembrane helix</keyword>
<keyword id="KW-0813">Transport</keyword>
<keyword id="KW-0830">Ubiquinone</keyword>
<dbReference type="EC" id="7.1.1.2"/>
<dbReference type="EMBL" id="U62532">
    <property type="protein sequence ID" value="AAC60312.1"/>
    <property type="molecule type" value="Genomic_DNA"/>
</dbReference>
<dbReference type="PIR" id="T11461">
    <property type="entry name" value="T11461"/>
</dbReference>
<dbReference type="RefSeq" id="NP_008323.1">
    <property type="nucleotide sequence ID" value="NC_001778.1"/>
</dbReference>
<dbReference type="SMR" id="Q95915"/>
<dbReference type="GeneID" id="808033"/>
<dbReference type="CTD" id="4537"/>
<dbReference type="GO" id="GO:0031966">
    <property type="term" value="C:mitochondrial membrane"/>
    <property type="evidence" value="ECO:0007669"/>
    <property type="project" value="UniProtKB-SubCell"/>
</dbReference>
<dbReference type="GO" id="GO:0030964">
    <property type="term" value="C:NADH dehydrogenase complex"/>
    <property type="evidence" value="ECO:0007669"/>
    <property type="project" value="TreeGrafter"/>
</dbReference>
<dbReference type="GO" id="GO:0008137">
    <property type="term" value="F:NADH dehydrogenase (ubiquinone) activity"/>
    <property type="evidence" value="ECO:0007669"/>
    <property type="project" value="UniProtKB-EC"/>
</dbReference>
<dbReference type="FunFam" id="1.20.58.1610:FF:000004">
    <property type="entry name" value="NADH-quinone oxidoreductase subunit A"/>
    <property type="match status" value="1"/>
</dbReference>
<dbReference type="Gene3D" id="1.20.58.1610">
    <property type="entry name" value="NADH:ubiquinone/plastoquinone oxidoreductase, chain 3"/>
    <property type="match status" value="1"/>
</dbReference>
<dbReference type="InterPro" id="IPR000440">
    <property type="entry name" value="NADH_UbQ/plastoQ_OxRdtase_su3"/>
</dbReference>
<dbReference type="InterPro" id="IPR038430">
    <property type="entry name" value="NDAH_ubi_oxred_su3_sf"/>
</dbReference>
<dbReference type="PANTHER" id="PTHR11058">
    <property type="entry name" value="NADH-UBIQUINONE OXIDOREDUCTASE CHAIN 3"/>
    <property type="match status" value="1"/>
</dbReference>
<dbReference type="PANTHER" id="PTHR11058:SF9">
    <property type="entry name" value="NADH-UBIQUINONE OXIDOREDUCTASE CHAIN 3"/>
    <property type="match status" value="1"/>
</dbReference>
<dbReference type="Pfam" id="PF00507">
    <property type="entry name" value="Oxidored_q4"/>
    <property type="match status" value="1"/>
</dbReference>
<name>NU3M_POLOR</name>
<sequence length="115" mass="13189">MNLILMMILISSLISTILAIVAFWLPQMNPDMEKLSPYECGFDPLGSARLPFSMRFFLVAILFLLFDLEIALLLPLPWSTHLDPTLMLMWAFTIIILLTIGLIYEWLQGGLEWAE</sequence>
<comment type="function">
    <text evidence="1">Core subunit of the mitochondrial membrane respiratory chain NADH dehydrogenase (Complex I) that is believed to belong to the minimal assembly required for catalysis. Complex I functions in the transfer of electrons from NADH to the respiratory chain. The immediate electron acceptor for the enzyme is believed to be ubiquinone (By similarity).</text>
</comment>
<comment type="catalytic activity">
    <reaction>
        <text>a ubiquinone + NADH + 5 H(+)(in) = a ubiquinol + NAD(+) + 4 H(+)(out)</text>
        <dbReference type="Rhea" id="RHEA:29091"/>
        <dbReference type="Rhea" id="RHEA-COMP:9565"/>
        <dbReference type="Rhea" id="RHEA-COMP:9566"/>
        <dbReference type="ChEBI" id="CHEBI:15378"/>
        <dbReference type="ChEBI" id="CHEBI:16389"/>
        <dbReference type="ChEBI" id="CHEBI:17976"/>
        <dbReference type="ChEBI" id="CHEBI:57540"/>
        <dbReference type="ChEBI" id="CHEBI:57945"/>
        <dbReference type="EC" id="7.1.1.2"/>
    </reaction>
</comment>
<comment type="subcellular location">
    <subcellularLocation>
        <location evidence="1">Mitochondrion membrane</location>
        <topology evidence="1">Multi-pass membrane protein</topology>
    </subcellularLocation>
</comment>
<comment type="similarity">
    <text evidence="3">Belongs to the complex I subunit 3 family.</text>
</comment>
<proteinExistence type="inferred from homology"/>
<protein>
    <recommendedName>
        <fullName>NADH-ubiquinone oxidoreductase chain 3</fullName>
        <ecNumber>7.1.1.2</ecNumber>
    </recommendedName>
    <alternativeName>
        <fullName>NADH dehydrogenase subunit 3</fullName>
    </alternativeName>
</protein>
<gene>
    <name type="primary">MT-ND3</name>
    <name type="synonym">MTND3</name>
    <name type="synonym">NADH3</name>
    <name type="synonym">ND3</name>
</gene>
<organism>
    <name type="scientific">Polypterus ornatipinnis</name>
    <name type="common">Ornate bichir</name>
    <dbReference type="NCBI Taxonomy" id="49895"/>
    <lineage>
        <taxon>Eukaryota</taxon>
        <taxon>Metazoa</taxon>
        <taxon>Chordata</taxon>
        <taxon>Craniata</taxon>
        <taxon>Vertebrata</taxon>
        <taxon>Euteleostomi</taxon>
        <taxon>Actinopterygii</taxon>
        <taxon>Polypteriformes</taxon>
        <taxon>Polypteridae</taxon>
        <taxon>Polypterus</taxon>
    </lineage>
</organism>
<geneLocation type="mitochondrion"/>
<reference key="1">
    <citation type="journal article" date="1996" name="Genetics">
        <title>The complete mitochondrial DNA sequence of the bichir (Polypterus ornatipinnis), a basal ray-finned fish: ancient establishment of the consensus vertebrate gene order.</title>
        <authorList>
            <person name="Noack K."/>
            <person name="Zardoya R."/>
            <person name="Meyer A."/>
        </authorList>
    </citation>
    <scope>NUCLEOTIDE SEQUENCE [GENOMIC DNA]</scope>
</reference>